<evidence type="ECO:0000255" key="1">
    <source>
        <dbReference type="HAMAP-Rule" id="MF_00071"/>
    </source>
</evidence>
<accession>C3L5S2</accession>
<gene>
    <name evidence="1" type="primary">lepA</name>
    <name type="ordered locus">BAMEG_4581</name>
</gene>
<feature type="chain" id="PRO_1000118034" description="Elongation factor 4">
    <location>
        <begin position="1"/>
        <end position="607"/>
    </location>
</feature>
<feature type="domain" description="tr-type G">
    <location>
        <begin position="11"/>
        <end position="193"/>
    </location>
</feature>
<feature type="binding site" evidence="1">
    <location>
        <begin position="23"/>
        <end position="28"/>
    </location>
    <ligand>
        <name>GTP</name>
        <dbReference type="ChEBI" id="CHEBI:37565"/>
    </ligand>
</feature>
<feature type="binding site" evidence="1">
    <location>
        <begin position="140"/>
        <end position="143"/>
    </location>
    <ligand>
        <name>GTP</name>
        <dbReference type="ChEBI" id="CHEBI:37565"/>
    </ligand>
</feature>
<sequence>MNKEERAKRQSKIRNFSIIAHIDHGKSTLADRILEKTNALTQREMKAQLLDSMDLERERGITIKLNAVQLNYKAKDGEEYILHLIDTPGHVDFTYEVSRSLAACEGAILVVDAAQGIEAQTLANVYLALDNNLEILPVINKIDLPSADPERVRQEVEDVIGLDASEAVLASAKAGIGIEEILEQIVEKVPAPTGDSEEPLQCMIFDSLYDPYRGVIAYIRVVNGTVKVGDKVRMMATGKEFEVTEVGVFTPKTTQRDELTVGDVGFLAASIKNVGDTRVGDTITHAKRPAAEPLAGYRKLNPMVFCGLYPIDSARYNDLRDALEKLELNDSALEFEPETSQALGFGFRCGFLGLLHMEILQERIEREFKIDLITTAPSVIYKVFLTNGEDMIVDNPSNMPDPQTIDRVEEPFVKAAIMVPNDYVGAVMEICQGKRGTFIDMQYLDETRVTLTYEIPLSEIVYDFFDQLKSNTKGYASFDYELIGYKPSKLVKMDILLNSEQVDALSFIVHRDSAYDRGKVIVEKLKELIPRQQFEVPIQATIGNKVVARSTIKAMRKNVLAKCYGGDISRKRKLLDKQKEGKKRMKSVGSVEVPQEAFMAVLKMDDN</sequence>
<protein>
    <recommendedName>
        <fullName evidence="1">Elongation factor 4</fullName>
        <shortName evidence="1">EF-4</shortName>
        <ecNumber evidence="1">3.6.5.n1</ecNumber>
    </recommendedName>
    <alternativeName>
        <fullName evidence="1">Ribosomal back-translocase LepA</fullName>
    </alternativeName>
</protein>
<organism>
    <name type="scientific">Bacillus anthracis (strain CDC 684 / NRRL 3495)</name>
    <dbReference type="NCBI Taxonomy" id="568206"/>
    <lineage>
        <taxon>Bacteria</taxon>
        <taxon>Bacillati</taxon>
        <taxon>Bacillota</taxon>
        <taxon>Bacilli</taxon>
        <taxon>Bacillales</taxon>
        <taxon>Bacillaceae</taxon>
        <taxon>Bacillus</taxon>
        <taxon>Bacillus cereus group</taxon>
    </lineage>
</organism>
<keyword id="KW-1003">Cell membrane</keyword>
<keyword id="KW-0342">GTP-binding</keyword>
<keyword id="KW-0378">Hydrolase</keyword>
<keyword id="KW-0472">Membrane</keyword>
<keyword id="KW-0547">Nucleotide-binding</keyword>
<keyword id="KW-0648">Protein biosynthesis</keyword>
<reference key="1">
    <citation type="submission" date="2008-10" db="EMBL/GenBank/DDBJ databases">
        <title>Genome sequence of Bacillus anthracis str. CDC 684.</title>
        <authorList>
            <person name="Dodson R.J."/>
            <person name="Munk A.C."/>
            <person name="Brettin T."/>
            <person name="Bruce D."/>
            <person name="Detter C."/>
            <person name="Tapia R."/>
            <person name="Han C."/>
            <person name="Sutton G."/>
            <person name="Sims D."/>
        </authorList>
    </citation>
    <scope>NUCLEOTIDE SEQUENCE [LARGE SCALE GENOMIC DNA]</scope>
    <source>
        <strain>CDC 684 / NRRL 3495</strain>
    </source>
</reference>
<name>LEPA_BACAC</name>
<dbReference type="EC" id="3.6.5.n1" evidence="1"/>
<dbReference type="EMBL" id="CP001215">
    <property type="protein sequence ID" value="ACP17576.1"/>
    <property type="molecule type" value="Genomic_DNA"/>
</dbReference>
<dbReference type="RefSeq" id="WP_001030956.1">
    <property type="nucleotide sequence ID" value="NC_012581.1"/>
</dbReference>
<dbReference type="SMR" id="C3L5S2"/>
<dbReference type="KEGG" id="bah:BAMEG_4581"/>
<dbReference type="HOGENOM" id="CLU_009995_3_3_9"/>
<dbReference type="GO" id="GO:0005886">
    <property type="term" value="C:plasma membrane"/>
    <property type="evidence" value="ECO:0007669"/>
    <property type="project" value="UniProtKB-SubCell"/>
</dbReference>
<dbReference type="GO" id="GO:0005525">
    <property type="term" value="F:GTP binding"/>
    <property type="evidence" value="ECO:0007669"/>
    <property type="project" value="UniProtKB-UniRule"/>
</dbReference>
<dbReference type="GO" id="GO:0003924">
    <property type="term" value="F:GTPase activity"/>
    <property type="evidence" value="ECO:0007669"/>
    <property type="project" value="UniProtKB-UniRule"/>
</dbReference>
<dbReference type="GO" id="GO:0043022">
    <property type="term" value="F:ribosome binding"/>
    <property type="evidence" value="ECO:0007669"/>
    <property type="project" value="UniProtKB-UniRule"/>
</dbReference>
<dbReference type="GO" id="GO:0003746">
    <property type="term" value="F:translation elongation factor activity"/>
    <property type="evidence" value="ECO:0007669"/>
    <property type="project" value="UniProtKB-UniRule"/>
</dbReference>
<dbReference type="GO" id="GO:0045727">
    <property type="term" value="P:positive regulation of translation"/>
    <property type="evidence" value="ECO:0007669"/>
    <property type="project" value="UniProtKB-UniRule"/>
</dbReference>
<dbReference type="CDD" id="cd03699">
    <property type="entry name" value="EF4_II"/>
    <property type="match status" value="1"/>
</dbReference>
<dbReference type="CDD" id="cd16260">
    <property type="entry name" value="EF4_III"/>
    <property type="match status" value="1"/>
</dbReference>
<dbReference type="CDD" id="cd01890">
    <property type="entry name" value="LepA"/>
    <property type="match status" value="1"/>
</dbReference>
<dbReference type="CDD" id="cd03709">
    <property type="entry name" value="lepA_C"/>
    <property type="match status" value="1"/>
</dbReference>
<dbReference type="FunFam" id="3.40.50.300:FF:000078">
    <property type="entry name" value="Elongation factor 4"/>
    <property type="match status" value="1"/>
</dbReference>
<dbReference type="FunFam" id="2.40.30.10:FF:000015">
    <property type="entry name" value="Translation factor GUF1, mitochondrial"/>
    <property type="match status" value="1"/>
</dbReference>
<dbReference type="FunFam" id="3.30.70.240:FF:000007">
    <property type="entry name" value="Translation factor GUF1, mitochondrial"/>
    <property type="match status" value="1"/>
</dbReference>
<dbReference type="FunFam" id="3.30.70.2570:FF:000001">
    <property type="entry name" value="Translation factor GUF1, mitochondrial"/>
    <property type="match status" value="1"/>
</dbReference>
<dbReference type="FunFam" id="3.30.70.870:FF:000004">
    <property type="entry name" value="Translation factor GUF1, mitochondrial"/>
    <property type="match status" value="1"/>
</dbReference>
<dbReference type="Gene3D" id="3.30.70.240">
    <property type="match status" value="1"/>
</dbReference>
<dbReference type="Gene3D" id="3.30.70.2570">
    <property type="entry name" value="Elongation factor 4, C-terminal domain"/>
    <property type="match status" value="1"/>
</dbReference>
<dbReference type="Gene3D" id="3.30.70.870">
    <property type="entry name" value="Elongation Factor G (Translational Gtpase), domain 3"/>
    <property type="match status" value="1"/>
</dbReference>
<dbReference type="Gene3D" id="3.40.50.300">
    <property type="entry name" value="P-loop containing nucleotide triphosphate hydrolases"/>
    <property type="match status" value="1"/>
</dbReference>
<dbReference type="Gene3D" id="2.40.30.10">
    <property type="entry name" value="Translation factors"/>
    <property type="match status" value="1"/>
</dbReference>
<dbReference type="HAMAP" id="MF_00071">
    <property type="entry name" value="LepA"/>
    <property type="match status" value="1"/>
</dbReference>
<dbReference type="InterPro" id="IPR006297">
    <property type="entry name" value="EF-4"/>
</dbReference>
<dbReference type="InterPro" id="IPR035647">
    <property type="entry name" value="EFG_III/V"/>
</dbReference>
<dbReference type="InterPro" id="IPR000640">
    <property type="entry name" value="EFG_V-like"/>
</dbReference>
<dbReference type="InterPro" id="IPR004161">
    <property type="entry name" value="EFTu-like_2"/>
</dbReference>
<dbReference type="InterPro" id="IPR031157">
    <property type="entry name" value="G_TR_CS"/>
</dbReference>
<dbReference type="InterPro" id="IPR038363">
    <property type="entry name" value="LepA_C_sf"/>
</dbReference>
<dbReference type="InterPro" id="IPR013842">
    <property type="entry name" value="LepA_CTD"/>
</dbReference>
<dbReference type="InterPro" id="IPR035654">
    <property type="entry name" value="LepA_IV"/>
</dbReference>
<dbReference type="InterPro" id="IPR027417">
    <property type="entry name" value="P-loop_NTPase"/>
</dbReference>
<dbReference type="InterPro" id="IPR005225">
    <property type="entry name" value="Small_GTP-bd"/>
</dbReference>
<dbReference type="InterPro" id="IPR000795">
    <property type="entry name" value="T_Tr_GTP-bd_dom"/>
</dbReference>
<dbReference type="NCBIfam" id="TIGR01393">
    <property type="entry name" value="lepA"/>
    <property type="match status" value="1"/>
</dbReference>
<dbReference type="NCBIfam" id="TIGR00231">
    <property type="entry name" value="small_GTP"/>
    <property type="match status" value="1"/>
</dbReference>
<dbReference type="PANTHER" id="PTHR43512:SF4">
    <property type="entry name" value="TRANSLATION FACTOR GUF1 HOMOLOG, CHLOROPLASTIC"/>
    <property type="match status" value="1"/>
</dbReference>
<dbReference type="PANTHER" id="PTHR43512">
    <property type="entry name" value="TRANSLATION FACTOR GUF1-RELATED"/>
    <property type="match status" value="1"/>
</dbReference>
<dbReference type="Pfam" id="PF00679">
    <property type="entry name" value="EFG_C"/>
    <property type="match status" value="1"/>
</dbReference>
<dbReference type="Pfam" id="PF00009">
    <property type="entry name" value="GTP_EFTU"/>
    <property type="match status" value="1"/>
</dbReference>
<dbReference type="Pfam" id="PF03144">
    <property type="entry name" value="GTP_EFTU_D2"/>
    <property type="match status" value="1"/>
</dbReference>
<dbReference type="Pfam" id="PF06421">
    <property type="entry name" value="LepA_C"/>
    <property type="match status" value="1"/>
</dbReference>
<dbReference type="PRINTS" id="PR00315">
    <property type="entry name" value="ELONGATNFCT"/>
</dbReference>
<dbReference type="SMART" id="SM00838">
    <property type="entry name" value="EFG_C"/>
    <property type="match status" value="1"/>
</dbReference>
<dbReference type="SUPFAM" id="SSF54980">
    <property type="entry name" value="EF-G C-terminal domain-like"/>
    <property type="match status" value="2"/>
</dbReference>
<dbReference type="SUPFAM" id="SSF52540">
    <property type="entry name" value="P-loop containing nucleoside triphosphate hydrolases"/>
    <property type="match status" value="1"/>
</dbReference>
<dbReference type="PROSITE" id="PS00301">
    <property type="entry name" value="G_TR_1"/>
    <property type="match status" value="1"/>
</dbReference>
<dbReference type="PROSITE" id="PS51722">
    <property type="entry name" value="G_TR_2"/>
    <property type="match status" value="1"/>
</dbReference>
<comment type="function">
    <text evidence="1">Required for accurate and efficient protein synthesis under certain stress conditions. May act as a fidelity factor of the translation reaction, by catalyzing a one-codon backward translocation of tRNAs on improperly translocated ribosomes. Back-translocation proceeds from a post-translocation (POST) complex to a pre-translocation (PRE) complex, thus giving elongation factor G a second chance to translocate the tRNAs correctly. Binds to ribosomes in a GTP-dependent manner.</text>
</comment>
<comment type="catalytic activity">
    <reaction evidence="1">
        <text>GTP + H2O = GDP + phosphate + H(+)</text>
        <dbReference type="Rhea" id="RHEA:19669"/>
        <dbReference type="ChEBI" id="CHEBI:15377"/>
        <dbReference type="ChEBI" id="CHEBI:15378"/>
        <dbReference type="ChEBI" id="CHEBI:37565"/>
        <dbReference type="ChEBI" id="CHEBI:43474"/>
        <dbReference type="ChEBI" id="CHEBI:58189"/>
        <dbReference type="EC" id="3.6.5.n1"/>
    </reaction>
</comment>
<comment type="subcellular location">
    <subcellularLocation>
        <location evidence="1">Cell membrane</location>
        <topology evidence="1">Peripheral membrane protein</topology>
        <orientation evidence="1">Cytoplasmic side</orientation>
    </subcellularLocation>
</comment>
<comment type="similarity">
    <text evidence="1">Belongs to the TRAFAC class translation factor GTPase superfamily. Classic translation factor GTPase family. LepA subfamily.</text>
</comment>
<proteinExistence type="inferred from homology"/>